<proteinExistence type="inferred from homology"/>
<accession>Q7A0U9</accession>
<evidence type="ECO:0000250" key="1"/>
<evidence type="ECO:0000305" key="2"/>
<name>DBH_STAAW</name>
<sequence>MNKTDLINAVAEQADLTKKEAGSAVDAVFESIQNSLAKGEKVQLIGFGNFEVRERAARKGRNPQTGKEIDIPASKVPAFKAGKALKDAVK</sequence>
<reference key="1">
    <citation type="journal article" date="2002" name="Lancet">
        <title>Genome and virulence determinants of high virulence community-acquired MRSA.</title>
        <authorList>
            <person name="Baba T."/>
            <person name="Takeuchi F."/>
            <person name="Kuroda M."/>
            <person name="Yuzawa H."/>
            <person name="Aoki K."/>
            <person name="Oguchi A."/>
            <person name="Nagai Y."/>
            <person name="Iwama N."/>
            <person name="Asano K."/>
            <person name="Naimi T."/>
            <person name="Kuroda H."/>
            <person name="Cui L."/>
            <person name="Yamamoto K."/>
            <person name="Hiramatsu K."/>
        </authorList>
    </citation>
    <scope>NUCLEOTIDE SEQUENCE [LARGE SCALE GENOMIC DNA]</scope>
    <source>
        <strain>MW2</strain>
    </source>
</reference>
<gene>
    <name type="primary">hup</name>
    <name type="ordered locus">MW1362</name>
</gene>
<feature type="chain" id="PRO_0000223380" description="DNA-binding protein HU">
    <location>
        <begin position="1"/>
        <end position="90"/>
    </location>
</feature>
<keyword id="KW-0226">DNA condensation</keyword>
<keyword id="KW-0238">DNA-binding</keyword>
<comment type="function">
    <text evidence="1">Histone-like DNA-binding protein which is capable of wrapping DNA to stabilize it, and thus to prevent its denaturation under extreme environmental conditions.</text>
</comment>
<comment type="subunit">
    <text evidence="1">Homodimer.</text>
</comment>
<comment type="similarity">
    <text evidence="2">Belongs to the bacterial histone-like protein family.</text>
</comment>
<dbReference type="EMBL" id="BA000033">
    <property type="protein sequence ID" value="BAB95227.1"/>
    <property type="molecule type" value="Genomic_DNA"/>
</dbReference>
<dbReference type="RefSeq" id="WP_001043863.1">
    <property type="nucleotide sequence ID" value="NC_003923.1"/>
</dbReference>
<dbReference type="SMR" id="Q7A0U9"/>
<dbReference type="KEGG" id="sam:MW1362"/>
<dbReference type="HOGENOM" id="CLU_105066_3_2_9"/>
<dbReference type="GO" id="GO:0005829">
    <property type="term" value="C:cytosol"/>
    <property type="evidence" value="ECO:0007669"/>
    <property type="project" value="TreeGrafter"/>
</dbReference>
<dbReference type="GO" id="GO:0003677">
    <property type="term" value="F:DNA binding"/>
    <property type="evidence" value="ECO:0007669"/>
    <property type="project" value="UniProtKB-KW"/>
</dbReference>
<dbReference type="GO" id="GO:0030527">
    <property type="term" value="F:structural constituent of chromatin"/>
    <property type="evidence" value="ECO:0007669"/>
    <property type="project" value="InterPro"/>
</dbReference>
<dbReference type="GO" id="GO:0030261">
    <property type="term" value="P:chromosome condensation"/>
    <property type="evidence" value="ECO:0007669"/>
    <property type="project" value="UniProtKB-KW"/>
</dbReference>
<dbReference type="CDD" id="cd13831">
    <property type="entry name" value="HU"/>
    <property type="match status" value="1"/>
</dbReference>
<dbReference type="FunFam" id="4.10.520.10:FF:000001">
    <property type="entry name" value="DNA-binding protein HU"/>
    <property type="match status" value="1"/>
</dbReference>
<dbReference type="Gene3D" id="4.10.520.10">
    <property type="entry name" value="IHF-like DNA-binding proteins"/>
    <property type="match status" value="1"/>
</dbReference>
<dbReference type="InterPro" id="IPR000119">
    <property type="entry name" value="Hist_DNA-bd"/>
</dbReference>
<dbReference type="InterPro" id="IPR020816">
    <property type="entry name" value="Histone-like_DNA-bd_CS"/>
</dbReference>
<dbReference type="InterPro" id="IPR010992">
    <property type="entry name" value="IHF-like_DNA-bd_dom_sf"/>
</dbReference>
<dbReference type="PANTHER" id="PTHR33175">
    <property type="entry name" value="DNA-BINDING PROTEIN HU"/>
    <property type="match status" value="1"/>
</dbReference>
<dbReference type="PANTHER" id="PTHR33175:SF3">
    <property type="entry name" value="DNA-BINDING PROTEIN HU-BETA"/>
    <property type="match status" value="1"/>
</dbReference>
<dbReference type="Pfam" id="PF00216">
    <property type="entry name" value="Bac_DNA_binding"/>
    <property type="match status" value="1"/>
</dbReference>
<dbReference type="PRINTS" id="PR01727">
    <property type="entry name" value="DNABINDINGHU"/>
</dbReference>
<dbReference type="SMART" id="SM00411">
    <property type="entry name" value="BHL"/>
    <property type="match status" value="1"/>
</dbReference>
<dbReference type="SUPFAM" id="SSF47729">
    <property type="entry name" value="IHF-like DNA-binding proteins"/>
    <property type="match status" value="1"/>
</dbReference>
<dbReference type="PROSITE" id="PS00045">
    <property type="entry name" value="HISTONE_LIKE"/>
    <property type="match status" value="1"/>
</dbReference>
<protein>
    <recommendedName>
        <fullName>DNA-binding protein HU</fullName>
    </recommendedName>
</protein>
<organism>
    <name type="scientific">Staphylococcus aureus (strain MW2)</name>
    <dbReference type="NCBI Taxonomy" id="196620"/>
    <lineage>
        <taxon>Bacteria</taxon>
        <taxon>Bacillati</taxon>
        <taxon>Bacillota</taxon>
        <taxon>Bacilli</taxon>
        <taxon>Bacillales</taxon>
        <taxon>Staphylococcaceae</taxon>
        <taxon>Staphylococcus</taxon>
    </lineage>
</organism>